<reference key="1">
    <citation type="journal article" date="2005" name="Science">
        <title>The transcriptional landscape of the mammalian genome.</title>
        <authorList>
            <person name="Carninci P."/>
            <person name="Kasukawa T."/>
            <person name="Katayama S."/>
            <person name="Gough J."/>
            <person name="Frith M.C."/>
            <person name="Maeda N."/>
            <person name="Oyama R."/>
            <person name="Ravasi T."/>
            <person name="Lenhard B."/>
            <person name="Wells C."/>
            <person name="Kodzius R."/>
            <person name="Shimokawa K."/>
            <person name="Bajic V.B."/>
            <person name="Brenner S.E."/>
            <person name="Batalov S."/>
            <person name="Forrest A.R."/>
            <person name="Zavolan M."/>
            <person name="Davis M.J."/>
            <person name="Wilming L.G."/>
            <person name="Aidinis V."/>
            <person name="Allen J.E."/>
            <person name="Ambesi-Impiombato A."/>
            <person name="Apweiler R."/>
            <person name="Aturaliya R.N."/>
            <person name="Bailey T.L."/>
            <person name="Bansal M."/>
            <person name="Baxter L."/>
            <person name="Beisel K.W."/>
            <person name="Bersano T."/>
            <person name="Bono H."/>
            <person name="Chalk A.M."/>
            <person name="Chiu K.P."/>
            <person name="Choudhary V."/>
            <person name="Christoffels A."/>
            <person name="Clutterbuck D.R."/>
            <person name="Crowe M.L."/>
            <person name="Dalla E."/>
            <person name="Dalrymple B.P."/>
            <person name="de Bono B."/>
            <person name="Della Gatta G."/>
            <person name="di Bernardo D."/>
            <person name="Down T."/>
            <person name="Engstrom P."/>
            <person name="Fagiolini M."/>
            <person name="Faulkner G."/>
            <person name="Fletcher C.F."/>
            <person name="Fukushima T."/>
            <person name="Furuno M."/>
            <person name="Futaki S."/>
            <person name="Gariboldi M."/>
            <person name="Georgii-Hemming P."/>
            <person name="Gingeras T.R."/>
            <person name="Gojobori T."/>
            <person name="Green R.E."/>
            <person name="Gustincich S."/>
            <person name="Harbers M."/>
            <person name="Hayashi Y."/>
            <person name="Hensch T.K."/>
            <person name="Hirokawa N."/>
            <person name="Hill D."/>
            <person name="Huminiecki L."/>
            <person name="Iacono M."/>
            <person name="Ikeo K."/>
            <person name="Iwama A."/>
            <person name="Ishikawa T."/>
            <person name="Jakt M."/>
            <person name="Kanapin A."/>
            <person name="Katoh M."/>
            <person name="Kawasawa Y."/>
            <person name="Kelso J."/>
            <person name="Kitamura H."/>
            <person name="Kitano H."/>
            <person name="Kollias G."/>
            <person name="Krishnan S.P."/>
            <person name="Kruger A."/>
            <person name="Kummerfeld S.K."/>
            <person name="Kurochkin I.V."/>
            <person name="Lareau L.F."/>
            <person name="Lazarevic D."/>
            <person name="Lipovich L."/>
            <person name="Liu J."/>
            <person name="Liuni S."/>
            <person name="McWilliam S."/>
            <person name="Madan Babu M."/>
            <person name="Madera M."/>
            <person name="Marchionni L."/>
            <person name="Matsuda H."/>
            <person name="Matsuzawa S."/>
            <person name="Miki H."/>
            <person name="Mignone F."/>
            <person name="Miyake S."/>
            <person name="Morris K."/>
            <person name="Mottagui-Tabar S."/>
            <person name="Mulder N."/>
            <person name="Nakano N."/>
            <person name="Nakauchi H."/>
            <person name="Ng P."/>
            <person name="Nilsson R."/>
            <person name="Nishiguchi S."/>
            <person name="Nishikawa S."/>
            <person name="Nori F."/>
            <person name="Ohara O."/>
            <person name="Okazaki Y."/>
            <person name="Orlando V."/>
            <person name="Pang K.C."/>
            <person name="Pavan W.J."/>
            <person name="Pavesi G."/>
            <person name="Pesole G."/>
            <person name="Petrovsky N."/>
            <person name="Piazza S."/>
            <person name="Reed J."/>
            <person name="Reid J.F."/>
            <person name="Ring B.Z."/>
            <person name="Ringwald M."/>
            <person name="Rost B."/>
            <person name="Ruan Y."/>
            <person name="Salzberg S.L."/>
            <person name="Sandelin A."/>
            <person name="Schneider C."/>
            <person name="Schoenbach C."/>
            <person name="Sekiguchi K."/>
            <person name="Semple C.A."/>
            <person name="Seno S."/>
            <person name="Sessa L."/>
            <person name="Sheng Y."/>
            <person name="Shibata Y."/>
            <person name="Shimada H."/>
            <person name="Shimada K."/>
            <person name="Silva D."/>
            <person name="Sinclair B."/>
            <person name="Sperling S."/>
            <person name="Stupka E."/>
            <person name="Sugiura K."/>
            <person name="Sultana R."/>
            <person name="Takenaka Y."/>
            <person name="Taki K."/>
            <person name="Tammoja K."/>
            <person name="Tan S.L."/>
            <person name="Tang S."/>
            <person name="Taylor M.S."/>
            <person name="Tegner J."/>
            <person name="Teichmann S.A."/>
            <person name="Ueda H.R."/>
            <person name="van Nimwegen E."/>
            <person name="Verardo R."/>
            <person name="Wei C.L."/>
            <person name="Yagi K."/>
            <person name="Yamanishi H."/>
            <person name="Zabarovsky E."/>
            <person name="Zhu S."/>
            <person name="Zimmer A."/>
            <person name="Hide W."/>
            <person name="Bult C."/>
            <person name="Grimmond S.M."/>
            <person name="Teasdale R.D."/>
            <person name="Liu E.T."/>
            <person name="Brusic V."/>
            <person name="Quackenbush J."/>
            <person name="Wahlestedt C."/>
            <person name="Mattick J.S."/>
            <person name="Hume D.A."/>
            <person name="Kai C."/>
            <person name="Sasaki D."/>
            <person name="Tomaru Y."/>
            <person name="Fukuda S."/>
            <person name="Kanamori-Katayama M."/>
            <person name="Suzuki M."/>
            <person name="Aoki J."/>
            <person name="Arakawa T."/>
            <person name="Iida J."/>
            <person name="Imamura K."/>
            <person name="Itoh M."/>
            <person name="Kato T."/>
            <person name="Kawaji H."/>
            <person name="Kawagashira N."/>
            <person name="Kawashima T."/>
            <person name="Kojima M."/>
            <person name="Kondo S."/>
            <person name="Konno H."/>
            <person name="Nakano K."/>
            <person name="Ninomiya N."/>
            <person name="Nishio T."/>
            <person name="Okada M."/>
            <person name="Plessy C."/>
            <person name="Shibata K."/>
            <person name="Shiraki T."/>
            <person name="Suzuki S."/>
            <person name="Tagami M."/>
            <person name="Waki K."/>
            <person name="Watahiki A."/>
            <person name="Okamura-Oho Y."/>
            <person name="Suzuki H."/>
            <person name="Kawai J."/>
            <person name="Hayashizaki Y."/>
        </authorList>
    </citation>
    <scope>NUCLEOTIDE SEQUENCE [LARGE SCALE MRNA] (ISOFORM 2)</scope>
    <scope>NUCLEOTIDE SEQUENCE [LARGE SCALE MRNA] OF 8-769 (ISOFORM 1)</scope>
    <source>
        <strain>C57BL/6J</strain>
        <tissue>Embryo</tissue>
        <tissue>Lung</tissue>
        <tissue>Ovary</tissue>
        <tissue>Uterus</tissue>
    </source>
</reference>
<reference key="2">
    <citation type="journal article" date="2009" name="PLoS Biol.">
        <title>Lineage-specific biology revealed by a finished genome assembly of the mouse.</title>
        <authorList>
            <person name="Church D.M."/>
            <person name="Goodstadt L."/>
            <person name="Hillier L.W."/>
            <person name="Zody M.C."/>
            <person name="Goldstein S."/>
            <person name="She X."/>
            <person name="Bult C.J."/>
            <person name="Agarwala R."/>
            <person name="Cherry J.L."/>
            <person name="DiCuccio M."/>
            <person name="Hlavina W."/>
            <person name="Kapustin Y."/>
            <person name="Meric P."/>
            <person name="Maglott D."/>
            <person name="Birtle Z."/>
            <person name="Marques A.C."/>
            <person name="Graves T."/>
            <person name="Zhou S."/>
            <person name="Teague B."/>
            <person name="Potamousis K."/>
            <person name="Churas C."/>
            <person name="Place M."/>
            <person name="Herschleb J."/>
            <person name="Runnheim R."/>
            <person name="Forrest D."/>
            <person name="Amos-Landgraf J."/>
            <person name="Schwartz D.C."/>
            <person name="Cheng Z."/>
            <person name="Lindblad-Toh K."/>
            <person name="Eichler E.E."/>
            <person name="Ponting C.P."/>
        </authorList>
    </citation>
    <scope>NUCLEOTIDE SEQUENCE [LARGE SCALE GENOMIC DNA]</scope>
    <source>
        <strain>C57BL/6J</strain>
    </source>
</reference>
<reference key="3">
    <citation type="journal article" date="2004" name="Mol. Cell. Proteomics">
        <title>Phosphoproteomic analysis of the developing mouse brain.</title>
        <authorList>
            <person name="Ballif B.A."/>
            <person name="Villen J."/>
            <person name="Beausoleil S.A."/>
            <person name="Schwartz D."/>
            <person name="Gygi S.P."/>
        </authorList>
    </citation>
    <scope>PHOSPHORYLATION [LARGE SCALE ANALYSIS] AT SER-118</scope>
    <scope>IDENTIFICATION BY MASS SPECTROMETRY [LARGE SCALE ANALYSIS]</scope>
    <source>
        <tissue>Embryonic brain</tissue>
    </source>
</reference>
<reference key="4">
    <citation type="journal article" date="2010" name="Cell">
        <title>A tissue-specific atlas of mouse protein phosphorylation and expression.</title>
        <authorList>
            <person name="Huttlin E.L."/>
            <person name="Jedrychowski M.P."/>
            <person name="Elias J.E."/>
            <person name="Goswami T."/>
            <person name="Rad R."/>
            <person name="Beausoleil S.A."/>
            <person name="Villen J."/>
            <person name="Haas W."/>
            <person name="Sowa M.E."/>
            <person name="Gygi S.P."/>
        </authorList>
    </citation>
    <scope>PHOSPHORYLATION [LARGE SCALE ANALYSIS] AT THR-86</scope>
    <scope>IDENTIFICATION BY MASS SPECTROMETRY [LARGE SCALE ANALYSIS]</scope>
    <source>
        <tissue>Kidney</tissue>
        <tissue>Testis</tissue>
    </source>
</reference>
<feature type="chain" id="PRO_0000262647" description="Intron Large complex component GCFC2">
    <location>
        <begin position="1"/>
        <end position="769"/>
    </location>
</feature>
<feature type="region of interest" description="Disordered" evidence="3">
    <location>
        <begin position="1"/>
        <end position="122"/>
    </location>
</feature>
<feature type="region of interest" description="Disordered" evidence="3">
    <location>
        <begin position="134"/>
        <end position="212"/>
    </location>
</feature>
<feature type="coiled-coil region" evidence="2">
    <location>
        <begin position="256"/>
        <end position="308"/>
    </location>
</feature>
<feature type="compositionally biased region" description="Basic and acidic residues" evidence="3">
    <location>
        <begin position="190"/>
        <end position="201"/>
    </location>
</feature>
<feature type="compositionally biased region" description="Acidic residues" evidence="3">
    <location>
        <begin position="202"/>
        <end position="212"/>
    </location>
</feature>
<feature type="modified residue" description="Phosphoserine" evidence="1">
    <location>
        <position position="16"/>
    </location>
</feature>
<feature type="modified residue" description="Phosphoserine" evidence="1">
    <location>
        <position position="17"/>
    </location>
</feature>
<feature type="modified residue" description="Phosphoserine" evidence="1">
    <location>
        <position position="19"/>
    </location>
</feature>
<feature type="modified residue" description="Phosphoserine" evidence="1">
    <location>
        <position position="85"/>
    </location>
</feature>
<feature type="modified residue" description="Phosphothreonine" evidence="7">
    <location>
        <position position="86"/>
    </location>
</feature>
<feature type="modified residue" description="Phosphoserine" evidence="6">
    <location>
        <position position="118"/>
    </location>
</feature>
<feature type="modified residue" description="Phosphoserine" evidence="1">
    <location>
        <position position="169"/>
    </location>
</feature>
<feature type="modified residue" description="Phosphoserine" evidence="1">
    <location>
        <position position="203"/>
    </location>
</feature>
<feature type="modified residue" description="Phosphoserine" evidence="1">
    <location>
        <position position="206"/>
    </location>
</feature>
<feature type="splice variant" id="VSP_021799" description="In isoform 2." evidence="4">
    <original>MQRRQAR</original>
    <variation>YLYKVQT</variation>
    <location>
        <begin position="399"/>
        <end position="405"/>
    </location>
</feature>
<feature type="splice variant" id="VSP_021800" description="In isoform 2." evidence="4">
    <location>
        <begin position="406"/>
        <end position="769"/>
    </location>
</feature>
<feature type="sequence conflict" description="In Ref. 1; BAE22958." evidence="5" ref="1">
    <original>V</original>
    <variation>F</variation>
    <location>
        <position position="121"/>
    </location>
</feature>
<evidence type="ECO:0000250" key="1">
    <source>
        <dbReference type="UniProtKB" id="P16383"/>
    </source>
</evidence>
<evidence type="ECO:0000255" key="2"/>
<evidence type="ECO:0000256" key="3">
    <source>
        <dbReference type="SAM" id="MobiDB-lite"/>
    </source>
</evidence>
<evidence type="ECO:0000303" key="4">
    <source>
    </source>
</evidence>
<evidence type="ECO:0000305" key="5"/>
<evidence type="ECO:0007744" key="6">
    <source>
    </source>
</evidence>
<evidence type="ECO:0007744" key="7">
    <source>
    </source>
</evidence>
<gene>
    <name type="primary">Gcfc2</name>
    <name type="synonym">Gcf</name>
    <name type="synonym">Tcf9</name>
</gene>
<name>GCFC2_MOUSE</name>
<organism>
    <name type="scientific">Mus musculus</name>
    <name type="common">Mouse</name>
    <dbReference type="NCBI Taxonomy" id="10090"/>
    <lineage>
        <taxon>Eukaryota</taxon>
        <taxon>Metazoa</taxon>
        <taxon>Chordata</taxon>
        <taxon>Craniata</taxon>
        <taxon>Vertebrata</taxon>
        <taxon>Euteleostomi</taxon>
        <taxon>Mammalia</taxon>
        <taxon>Eutheria</taxon>
        <taxon>Euarchontoglires</taxon>
        <taxon>Glires</taxon>
        <taxon>Rodentia</taxon>
        <taxon>Myomorpha</taxon>
        <taxon>Muroidea</taxon>
        <taxon>Muridae</taxon>
        <taxon>Murinae</taxon>
        <taxon>Mus</taxon>
        <taxon>Mus</taxon>
    </lineage>
</organism>
<dbReference type="EMBL" id="AK050789">
    <property type="protein sequence ID" value="BAC34411.1"/>
    <property type="status" value="ALT_INIT"/>
    <property type="molecule type" value="mRNA"/>
</dbReference>
<dbReference type="EMBL" id="AK077263">
    <property type="protein sequence ID" value="BAC36717.1"/>
    <property type="molecule type" value="mRNA"/>
</dbReference>
<dbReference type="EMBL" id="AK136387">
    <property type="protein sequence ID" value="BAE22958.1"/>
    <property type="molecule type" value="mRNA"/>
</dbReference>
<dbReference type="EMBL" id="AC129024">
    <property type="status" value="NOT_ANNOTATED_CDS"/>
    <property type="molecule type" value="Genomic_DNA"/>
</dbReference>
<dbReference type="CCDS" id="CCDS20260.1">
    <molecule id="Q8BKT3-1"/>
</dbReference>
<dbReference type="RefSeq" id="NP_808552.2">
    <molecule id="Q8BKT3-1"/>
    <property type="nucleotide sequence ID" value="NM_177884.4"/>
</dbReference>
<dbReference type="SMR" id="Q8BKT3"/>
<dbReference type="BioGRID" id="236949">
    <property type="interactions" value="4"/>
</dbReference>
<dbReference type="FunCoup" id="Q8BKT3">
    <property type="interactions" value="4345"/>
</dbReference>
<dbReference type="IntAct" id="Q8BKT3">
    <property type="interactions" value="3"/>
</dbReference>
<dbReference type="STRING" id="10090.ENSMUSP00000035644"/>
<dbReference type="iPTMnet" id="Q8BKT3"/>
<dbReference type="PhosphoSitePlus" id="Q8BKT3"/>
<dbReference type="SwissPalm" id="Q8BKT3"/>
<dbReference type="jPOST" id="Q8BKT3"/>
<dbReference type="PaxDb" id="10090-ENSMUSP00000035644"/>
<dbReference type="PeptideAtlas" id="Q8BKT3"/>
<dbReference type="ProteomicsDB" id="267779">
    <molecule id="Q8BKT3-1"/>
</dbReference>
<dbReference type="ProteomicsDB" id="267780">
    <molecule id="Q8BKT3-2"/>
</dbReference>
<dbReference type="Pumba" id="Q8BKT3"/>
<dbReference type="Antibodypedia" id="31654">
    <property type="antibodies" value="168 antibodies from 28 providers"/>
</dbReference>
<dbReference type="DNASU" id="330361"/>
<dbReference type="Ensembl" id="ENSMUST00000043195.11">
    <molecule id="Q8BKT3-1"/>
    <property type="protein sequence ID" value="ENSMUSP00000035644.5"/>
    <property type="gene ID" value="ENSMUSG00000035125.11"/>
</dbReference>
<dbReference type="GeneID" id="330361"/>
<dbReference type="KEGG" id="mmu:330361"/>
<dbReference type="UCSC" id="uc009clc.1">
    <molecule id="Q8BKT3-2"/>
    <property type="organism name" value="mouse"/>
</dbReference>
<dbReference type="UCSC" id="uc009cld.1">
    <molecule id="Q8BKT3-1"/>
    <property type="organism name" value="mouse"/>
</dbReference>
<dbReference type="AGR" id="MGI:2141656"/>
<dbReference type="CTD" id="6936"/>
<dbReference type="MGI" id="MGI:2141656">
    <property type="gene designation" value="Gcfc2"/>
</dbReference>
<dbReference type="VEuPathDB" id="HostDB:ENSMUSG00000035125"/>
<dbReference type="eggNOG" id="KOG2136">
    <property type="taxonomic scope" value="Eukaryota"/>
</dbReference>
<dbReference type="GeneTree" id="ENSGT00390000000455"/>
<dbReference type="HOGENOM" id="CLU_010846_2_0_1"/>
<dbReference type="InParanoid" id="Q8BKT3"/>
<dbReference type="OMA" id="KQAMTLM"/>
<dbReference type="OrthoDB" id="429427at2759"/>
<dbReference type="PhylomeDB" id="Q8BKT3"/>
<dbReference type="TreeFam" id="TF315109"/>
<dbReference type="BioGRID-ORCS" id="330361">
    <property type="hits" value="3 hits in 78 CRISPR screens"/>
</dbReference>
<dbReference type="ChiTaRS" id="Gcfc2">
    <property type="organism name" value="mouse"/>
</dbReference>
<dbReference type="PRO" id="PR:Q8BKT3"/>
<dbReference type="Proteomes" id="UP000000589">
    <property type="component" value="Chromosome 6"/>
</dbReference>
<dbReference type="RNAct" id="Q8BKT3">
    <property type="molecule type" value="protein"/>
</dbReference>
<dbReference type="Bgee" id="ENSMUSG00000035125">
    <property type="expression patterns" value="Expressed in manus and 185 other cell types or tissues"/>
</dbReference>
<dbReference type="ExpressionAtlas" id="Q8BKT3">
    <property type="expression patterns" value="baseline and differential"/>
</dbReference>
<dbReference type="GO" id="GO:0005829">
    <property type="term" value="C:cytosol"/>
    <property type="evidence" value="ECO:0007669"/>
    <property type="project" value="Ensembl"/>
</dbReference>
<dbReference type="GO" id="GO:0005730">
    <property type="term" value="C:nucleolus"/>
    <property type="evidence" value="ECO:0000250"/>
    <property type="project" value="UniProtKB"/>
</dbReference>
<dbReference type="GO" id="GO:0005654">
    <property type="term" value="C:nucleoplasm"/>
    <property type="evidence" value="ECO:0007669"/>
    <property type="project" value="UniProtKB-SubCell"/>
</dbReference>
<dbReference type="GO" id="GO:0005634">
    <property type="term" value="C:nucleus"/>
    <property type="evidence" value="ECO:0000250"/>
    <property type="project" value="UniProtKB"/>
</dbReference>
<dbReference type="GO" id="GO:0071008">
    <property type="term" value="C:U2-type post-mRNA release spliceosomal complex"/>
    <property type="evidence" value="ECO:0000250"/>
    <property type="project" value="UniProtKB"/>
</dbReference>
<dbReference type="GO" id="GO:0003677">
    <property type="term" value="F:DNA binding"/>
    <property type="evidence" value="ECO:0007669"/>
    <property type="project" value="InterPro"/>
</dbReference>
<dbReference type="GO" id="GO:0000245">
    <property type="term" value="P:spliceosomal complex assembly"/>
    <property type="evidence" value="ECO:0000250"/>
    <property type="project" value="UniProtKB"/>
</dbReference>
<dbReference type="InterPro" id="IPR012890">
    <property type="entry name" value="GCFC2-like"/>
</dbReference>
<dbReference type="InterPro" id="IPR022783">
    <property type="entry name" value="GCFC_dom"/>
</dbReference>
<dbReference type="PANTHER" id="PTHR12214">
    <property type="entry name" value="GC-RICH SEQUENCE DNA-BINDING FACTOR"/>
    <property type="match status" value="1"/>
</dbReference>
<dbReference type="PANTHER" id="PTHR12214:SF4">
    <property type="entry name" value="INTRON LARGE COMPLEX COMPONENT GCFC2"/>
    <property type="match status" value="1"/>
</dbReference>
<dbReference type="Pfam" id="PF07842">
    <property type="entry name" value="GCFC"/>
    <property type="match status" value="1"/>
</dbReference>
<sequence length="769" mass="87442">MALRPQRTFRRRQVESSDSDSDSDGAKEQSAEEPASAGGRTEGAERPRGARSARGRGRVWASSRRSPGAAPRGDGGAECRTAELSTDEEEGTHTLTGSKGDRSPSSDSSCSLEERDVSPIVEIPDAAFIQAARRKRELARTPGDYISLDVNHSCSTSDCKRSNEEDPESDPDDHEKRILFTPKPQTLRQRMAEETSIRSEESSEESQEDENQDIWEQQQMRKAVRIPAGQNTDLSHSSKSQTLKKFDTSISFPPVNLEIIKKQLNNRLTLLQESHRSHQREYEKYEQDIKSSKTAIQNLESASDHAQNYRFYRGMKSYVENIIDCLNEKIVSIVELESSMYTLLLKRSEALLKRRQDELKCESSYLQQLSRKDETSANGSLAVDEKDQRILEEIEARRMQRRQARELSGSCDHQEGMSSDDELSPAEMTNFHKCQGDILQDCKKVFEDVHDDFCNVQNILLKFQQWREKFPDSYYEAFVGFCLPKLLSPLIRVQLLDWNPLKMDSIGLDKMPWFTAITEFMESSMDDIGKEDGSDKKILAAVINKTVVPRLTDFVETIWDPLSTSQTRSLTVHCRVAFEQFASENEVSKNKQDLLKSIVARMKKSIEDDIFIPLYPKSSEEGKMSPHSKFQERQFWGALKLFRNILLWNGLLPDDTLQDLGLGKLLNRYLIISLTNAVPGPDVVKKCSQIAACLPERWFENSAMRTSIPQLENFIKFLLQSAQKLSSSEFRNEVSEIILILVKVKALTQAESLREERPLEPLPAQSTGV</sequence>
<keyword id="KW-0025">Alternative splicing</keyword>
<keyword id="KW-0175">Coiled coil</keyword>
<keyword id="KW-0507">mRNA processing</keyword>
<keyword id="KW-0508">mRNA splicing</keyword>
<keyword id="KW-0539">Nucleus</keyword>
<keyword id="KW-0597">Phosphoprotein</keyword>
<keyword id="KW-1185">Reference proteome</keyword>
<proteinExistence type="evidence at protein level"/>
<accession>Q8BKT3</accession>
<accession>Q3UWF7</accession>
<accession>Q8BK44</accession>
<comment type="function">
    <text evidence="1">Involved in pre-mRNA splicing through regulating spliceosome C complex formation (By similarity). May play a role during late-stage splicing events and turnover of excised introns (By similarity).</text>
</comment>
<comment type="subunit">
    <text evidence="1">Found in the Intron Large (IL) complex, a post-mRNA release spliceosomal complex containing the excised intron, U2, U5 and U6 snRNPs, and splicing factors (By similarity). Interacts with TFIP11 and DHX15 (By similarity).</text>
</comment>
<comment type="subcellular location">
    <subcellularLocation>
        <location evidence="1">Nucleus</location>
        <location evidence="1">Nucleoplasm</location>
    </subcellularLocation>
    <subcellularLocation>
        <location evidence="1">Nucleus</location>
        <location evidence="1">Nucleolus</location>
    </subcellularLocation>
</comment>
<comment type="alternative products">
    <event type="alternative splicing"/>
    <isoform>
        <id>Q8BKT3-1</id>
        <name>1</name>
        <sequence type="displayed"/>
    </isoform>
    <isoform>
        <id>Q8BKT3-2</id>
        <name>2</name>
        <sequence type="described" ref="VSP_021799 VSP_021800"/>
    </isoform>
</comment>
<comment type="similarity">
    <text evidence="5">Belongs to the GCF family.</text>
</comment>
<comment type="caution">
    <text evidence="1">Was originally thought to be a DNA-binding transcriptional repressor (By similarity). However, later work showed that the original sequence was a chimera and that the DNA-binding activity was derived from the incorrect N-terminal sequence (By similarity).</text>
</comment>
<comment type="sequence caution" evidence="5">
    <conflict type="erroneous initiation">
        <sequence resource="EMBL-CDS" id="BAC34411"/>
    </conflict>
    <text>Truncated N-terminus.</text>
</comment>
<protein>
    <recommendedName>
        <fullName>Intron Large complex component GCFC2</fullName>
    </recommendedName>
    <alternativeName>
        <fullName>GC-rich sequence DNA-binding factor</fullName>
    </alternativeName>
    <alternativeName>
        <fullName>GC-rich sequence DNA-binding factor 2</fullName>
    </alternativeName>
    <alternativeName>
        <fullName>Transcription factor 9</fullName>
        <shortName>TCF-9</shortName>
    </alternativeName>
</protein>